<keyword id="KW-0004">4Fe-4S</keyword>
<keyword id="KW-0408">Iron</keyword>
<keyword id="KW-0411">Iron-sulfur</keyword>
<keyword id="KW-0413">Isomerase</keyword>
<keyword id="KW-0479">Metal-binding</keyword>
<keyword id="KW-0663">Pyridoxal phosphate</keyword>
<keyword id="KW-1185">Reference proteome</keyword>
<keyword id="KW-0949">S-adenosyl-L-methionine</keyword>
<reference key="1">
    <citation type="journal article" date="2002" name="J. Bacteriol.">
        <title>Genome sequence and analysis of the oral bacterium Fusobacterium nucleatum strain ATCC 25586.</title>
        <authorList>
            <person name="Kapatral V."/>
            <person name="Anderson I."/>
            <person name="Ivanova N."/>
            <person name="Reznik G."/>
            <person name="Los T."/>
            <person name="Lykidis A."/>
            <person name="Bhattacharyya A."/>
            <person name="Bartman A."/>
            <person name="Gardner W."/>
            <person name="Grechkin G."/>
            <person name="Zhu L."/>
            <person name="Vasieva O."/>
            <person name="Chu L."/>
            <person name="Kogan Y."/>
            <person name="Chaga O."/>
            <person name="Goltsman E."/>
            <person name="Bernal A."/>
            <person name="Larsen N."/>
            <person name="D'Souza M."/>
            <person name="Walunas T."/>
            <person name="Pusch G."/>
            <person name="Haselkorn R."/>
            <person name="Fonstein M."/>
            <person name="Kyrpides N.C."/>
            <person name="Overbeek R."/>
        </authorList>
    </citation>
    <scope>NUCLEOTIDE SEQUENCE [LARGE SCALE GENOMIC DNA]</scope>
    <source>
        <strain>ATCC 25586 / DSM 15643 / BCRC 10681 / CIP 101130 / JCM 8532 / KCTC 2640 / LMG 13131 / VPI 4355</strain>
    </source>
</reference>
<reference evidence="8" key="2">
    <citation type="journal article" date="1982" name="J. Bacteriol.">
        <title>Pathway of lysine degradation in Fusobacterium nucleatum.</title>
        <authorList>
            <person name="Barker H.A."/>
            <person name="Kahn J.M."/>
            <person name="Hedrick L."/>
        </authorList>
    </citation>
    <scope>FUNCTION</scope>
    <scope>CATALYTIC ACTIVITY</scope>
    <scope>PATHWAY</scope>
    <source>
        <strain evidence="5">ATCC 25586 / DSM 15643 / BCRC 10681 / CIP 101130 / JCM 8532 / KCTC 2640 / LMG 13131 / VPI 4355</strain>
    </source>
</reference>
<reference evidence="8" key="3">
    <citation type="journal article" date="2007" name="J. Biol. Chem.">
        <title>Identification of the last unknown genes in the fermentation pathway of lysine.</title>
        <authorList>
            <person name="Kreimeyer A."/>
            <person name="Perret A."/>
            <person name="Lechaplais C."/>
            <person name="Vallenet D."/>
            <person name="Medigue C."/>
            <person name="Salanoubat M."/>
            <person name="Weissenbach J."/>
        </authorList>
    </citation>
    <scope>IDENTIFICATION</scope>
    <source>
        <strain evidence="4">ATCC 25586 / DSM 15643 / BCRC 10681 / CIP 101130 / JCM 8532 / KCTC 2640 / LMG 13131 / VPI 4355</strain>
    </source>
</reference>
<organism>
    <name type="scientific">Fusobacterium nucleatum subsp. nucleatum (strain ATCC 25586 / DSM 15643 / BCRC 10681 / CIP 101130 / JCM 8532 / KCTC 2640 / LMG 13131 / VPI 4355)</name>
    <dbReference type="NCBI Taxonomy" id="190304"/>
    <lineage>
        <taxon>Bacteria</taxon>
        <taxon>Fusobacteriati</taxon>
        <taxon>Fusobacteriota</taxon>
        <taxon>Fusobacteriia</taxon>
        <taxon>Fusobacteriales</taxon>
        <taxon>Fusobacteriaceae</taxon>
        <taxon>Fusobacterium</taxon>
    </lineage>
</organism>
<name>KAMA_FUSNN</name>
<accession>Q8RHX4</accession>
<comment type="function">
    <text evidence="5">Catalyzes the interconversion of L-alpha-lysine and L-beta-lysine.</text>
</comment>
<comment type="catalytic activity">
    <reaction evidence="5">
        <text>L-lysine = (3S)-3,6-diaminohexanoate</text>
        <dbReference type="Rhea" id="RHEA:19177"/>
        <dbReference type="ChEBI" id="CHEBI:32551"/>
        <dbReference type="ChEBI" id="CHEBI:57434"/>
        <dbReference type="EC" id="5.4.3.2"/>
    </reaction>
</comment>
<comment type="cofactor">
    <cofactor evidence="1">
        <name>[4Fe-4S] cluster</name>
        <dbReference type="ChEBI" id="CHEBI:49883"/>
    </cofactor>
    <text evidence="1">Binds 1 [4Fe-4S] cluster. The cluster is coordinated with 3 cysteines and an exchangeable S-adenosyl-L-methionine.</text>
</comment>
<comment type="cofactor">
    <cofactor evidence="2">
        <name>pyridoxal 5'-phosphate</name>
        <dbReference type="ChEBI" id="CHEBI:597326"/>
    </cofactor>
</comment>
<comment type="pathway">
    <text evidence="5">Amino-acid degradation; L-lysine degradation via acetate pathway.</text>
</comment>
<comment type="subunit">
    <text evidence="2">Homotetramer.</text>
</comment>
<comment type="similarity">
    <text evidence="8">Belongs to the radical SAM superfamily. KamA family.</text>
</comment>
<feature type="chain" id="PRO_0000416974" description="L-lysine 2,3-aminomutase">
    <location>
        <begin position="1"/>
        <end position="425"/>
    </location>
</feature>
<feature type="domain" description="Radical SAM core" evidence="3">
    <location>
        <begin position="113"/>
        <end position="325"/>
    </location>
</feature>
<feature type="binding site" evidence="2">
    <location>
        <position position="127"/>
    </location>
    <ligand>
        <name>[4Fe-4S] cluster</name>
        <dbReference type="ChEBI" id="CHEBI:49883"/>
        <note>4Fe-4S-S-AdoMet</note>
    </ligand>
</feature>
<feature type="binding site" evidence="2">
    <location>
        <position position="131"/>
    </location>
    <ligand>
        <name>[4Fe-4S] cluster</name>
        <dbReference type="ChEBI" id="CHEBI:49883"/>
        <note>4Fe-4S-S-AdoMet</note>
    </ligand>
</feature>
<feature type="binding site" evidence="2">
    <location>
        <position position="134"/>
    </location>
    <ligand>
        <name>[4Fe-4S] cluster</name>
        <dbReference type="ChEBI" id="CHEBI:49883"/>
        <note>4Fe-4S-S-AdoMet</note>
    </ligand>
</feature>
<feature type="modified residue" description="N6-(pyridoxal phosphate)lysine" evidence="2">
    <location>
        <position position="339"/>
    </location>
</feature>
<proteinExistence type="evidence at protein level"/>
<sequence length="425" mass="48747">MNTVNTRKKFFPNVTDEEWNDWTWQVKNRLESVEDLKKYVDLSEEETEGVVRTLETLRMAITPYYFSLIDLNSDRCPIRKQAIPTIQEIHQSDADLLDPLHEDEDSPVPGLTHRYPDRVLLLITDMCSMYCRHCTRRRFAGSSDDAMPMDRIDKAIEYIAKTPQVRDVLLSGGDALLVSDKKLESIIQKLRAIPHVEIIRIGSRTPVVLPQRITPELCNMLKKYHPIWLNTHFNHPQEVTPEAKKACEMLADAGVPLGNQTVLLRGINDSVPVMKRLVHDLVMMRVRPYYIYQCDLSMGLEHFRTPVSKGIEIIEGLRGHTSGYAVPTFVVDAPGGGGKTPVMPQYVISQSPHRVVLRNFEGVITTYTEPENYTHEPCYDEEKFEKMYEISGVYMLDEGLKMSLEPSHLARHERNKKRAEAEGKK</sequence>
<gene>
    <name evidence="2" type="primary">kamA</name>
    <name type="ordered locus">FN1866</name>
</gene>
<dbReference type="EC" id="5.4.3.2" evidence="5"/>
<dbReference type="EMBL" id="AE009951">
    <property type="protein sequence ID" value="AAL93965.1"/>
    <property type="molecule type" value="Genomic_DNA"/>
</dbReference>
<dbReference type="RefSeq" id="NP_602666.1">
    <property type="nucleotide sequence ID" value="NC_003454.1"/>
</dbReference>
<dbReference type="RefSeq" id="WP_005902971.1">
    <property type="nucleotide sequence ID" value="NZ_OZ209243.1"/>
</dbReference>
<dbReference type="SMR" id="Q8RHX4"/>
<dbReference type="FunCoup" id="Q8RHX4">
    <property type="interactions" value="52"/>
</dbReference>
<dbReference type="STRING" id="190304.FN1866"/>
<dbReference type="PaxDb" id="190304-FN1866"/>
<dbReference type="EnsemblBacteria" id="AAL93965">
    <property type="protein sequence ID" value="AAL93965"/>
    <property type="gene ID" value="FN1866"/>
</dbReference>
<dbReference type="GeneID" id="79783112"/>
<dbReference type="KEGG" id="fnu:FN1866"/>
<dbReference type="PATRIC" id="fig|190304.8.peg.342"/>
<dbReference type="eggNOG" id="COG1509">
    <property type="taxonomic scope" value="Bacteria"/>
</dbReference>
<dbReference type="HOGENOM" id="CLU_032161_0_0_0"/>
<dbReference type="InParanoid" id="Q8RHX4"/>
<dbReference type="BioCyc" id="FNUC190304:G1FZS-363-MONOMER"/>
<dbReference type="BioCyc" id="MetaCyc:MONOMER-12292"/>
<dbReference type="UniPathway" id="UPA00870"/>
<dbReference type="Proteomes" id="UP000002521">
    <property type="component" value="Chromosome"/>
</dbReference>
<dbReference type="GO" id="GO:0051539">
    <property type="term" value="F:4 iron, 4 sulfur cluster binding"/>
    <property type="evidence" value="ECO:0000318"/>
    <property type="project" value="GO_Central"/>
</dbReference>
<dbReference type="GO" id="GO:0016869">
    <property type="term" value="F:intramolecular aminotransferase activity"/>
    <property type="evidence" value="ECO:0000318"/>
    <property type="project" value="GO_Central"/>
</dbReference>
<dbReference type="GO" id="GO:0050066">
    <property type="term" value="F:L-lysine 2,3-aminomutase activity"/>
    <property type="evidence" value="ECO:0007669"/>
    <property type="project" value="UniProtKB-EC"/>
</dbReference>
<dbReference type="GO" id="GO:0046872">
    <property type="term" value="F:metal ion binding"/>
    <property type="evidence" value="ECO:0007669"/>
    <property type="project" value="UniProtKB-KW"/>
</dbReference>
<dbReference type="GO" id="GO:0019475">
    <property type="term" value="P:L-lysine catabolic process to acetate"/>
    <property type="evidence" value="ECO:0007669"/>
    <property type="project" value="UniProtKB-UniPathway"/>
</dbReference>
<dbReference type="CDD" id="cd01335">
    <property type="entry name" value="Radical_SAM"/>
    <property type="match status" value="1"/>
</dbReference>
<dbReference type="FunFam" id="3.20.20.70:FF:000095">
    <property type="entry name" value="Lysine 2,3-aminomutase"/>
    <property type="match status" value="1"/>
</dbReference>
<dbReference type="Gene3D" id="6.10.140.1170">
    <property type="match status" value="1"/>
</dbReference>
<dbReference type="Gene3D" id="6.20.120.40">
    <property type="match status" value="1"/>
</dbReference>
<dbReference type="Gene3D" id="3.20.20.70">
    <property type="entry name" value="Aldolase class I"/>
    <property type="match status" value="1"/>
</dbReference>
<dbReference type="InterPro" id="IPR013785">
    <property type="entry name" value="Aldolase_TIM"/>
</dbReference>
<dbReference type="InterPro" id="IPR025895">
    <property type="entry name" value="LAM_C_dom"/>
</dbReference>
<dbReference type="InterPro" id="IPR003739">
    <property type="entry name" value="Lys_aminomutase/Glu_NH3_mut"/>
</dbReference>
<dbReference type="InterPro" id="IPR022459">
    <property type="entry name" value="Lysine_aminomutase"/>
</dbReference>
<dbReference type="InterPro" id="IPR007197">
    <property type="entry name" value="rSAM"/>
</dbReference>
<dbReference type="NCBIfam" id="TIGR00238">
    <property type="entry name" value="KamA family radical SAM protein"/>
    <property type="match status" value="1"/>
</dbReference>
<dbReference type="NCBIfam" id="TIGR03820">
    <property type="entry name" value="lys_2_3_AblA"/>
    <property type="match status" value="1"/>
</dbReference>
<dbReference type="PANTHER" id="PTHR30538:SF1">
    <property type="entry name" value="L-LYSINE 2,3-AMINOMUTASE"/>
    <property type="match status" value="1"/>
</dbReference>
<dbReference type="PANTHER" id="PTHR30538">
    <property type="entry name" value="LYSINE 2,3-AMINOMUTASE-RELATED"/>
    <property type="match status" value="1"/>
</dbReference>
<dbReference type="Pfam" id="PF12544">
    <property type="entry name" value="LAM_C"/>
    <property type="match status" value="1"/>
</dbReference>
<dbReference type="Pfam" id="PF04055">
    <property type="entry name" value="Radical_SAM"/>
    <property type="match status" value="1"/>
</dbReference>
<dbReference type="PIRSF" id="PIRSF004911">
    <property type="entry name" value="DUF160"/>
    <property type="match status" value="1"/>
</dbReference>
<dbReference type="SFLD" id="SFLDF00283">
    <property type="entry name" value="L-lysine_2_3-aminomutase_(LAM"/>
    <property type="match status" value="1"/>
</dbReference>
<dbReference type="SFLD" id="SFLDG01070">
    <property type="entry name" value="PLP-dependent"/>
    <property type="match status" value="1"/>
</dbReference>
<dbReference type="SUPFAM" id="SSF102114">
    <property type="entry name" value="Radical SAM enzymes"/>
    <property type="match status" value="1"/>
</dbReference>
<dbReference type="PROSITE" id="PS51918">
    <property type="entry name" value="RADICAL_SAM"/>
    <property type="match status" value="1"/>
</dbReference>
<evidence type="ECO:0000250" key="1"/>
<evidence type="ECO:0000250" key="2">
    <source>
        <dbReference type="UniProtKB" id="Q9XBQ8"/>
    </source>
</evidence>
<evidence type="ECO:0000255" key="3">
    <source>
        <dbReference type="PROSITE-ProRule" id="PRU01266"/>
    </source>
</evidence>
<evidence type="ECO:0000269" key="4">
    <source>
    </source>
</evidence>
<evidence type="ECO:0000269" key="5">
    <source>
    </source>
</evidence>
<evidence type="ECO:0000303" key="6">
    <source>
    </source>
</evidence>
<evidence type="ECO:0000303" key="7">
    <source>
    </source>
</evidence>
<evidence type="ECO:0000305" key="8"/>
<protein>
    <recommendedName>
        <fullName evidence="7">L-lysine 2,3-aminomutase</fullName>
        <shortName evidence="2">LAM</shortName>
        <ecNumber evidence="5">5.4.3.2</ecNumber>
    </recommendedName>
    <alternativeName>
        <fullName evidence="6">KAM</fullName>
    </alternativeName>
</protein>